<organism>
    <name type="scientific">Bartonella quintana (strain Toulouse)</name>
    <name type="common">Rochalimaea quintana</name>
    <dbReference type="NCBI Taxonomy" id="283165"/>
    <lineage>
        <taxon>Bacteria</taxon>
        <taxon>Pseudomonadati</taxon>
        <taxon>Pseudomonadota</taxon>
        <taxon>Alphaproteobacteria</taxon>
        <taxon>Hyphomicrobiales</taxon>
        <taxon>Bartonellaceae</taxon>
        <taxon>Bartonella</taxon>
    </lineage>
</organism>
<gene>
    <name type="primary">virB9</name>
    <name type="ordered locus">BQ10600</name>
</gene>
<accession>Q6FYW2</accession>
<accession>Q4L2Q4</accession>
<accession>Q84BW5</accession>
<evidence type="ECO:0000250" key="1"/>
<evidence type="ECO:0000255" key="2">
    <source>
        <dbReference type="PROSITE-ProRule" id="PRU00303"/>
    </source>
</evidence>
<evidence type="ECO:0000256" key="3">
    <source>
        <dbReference type="SAM" id="MobiDB-lite"/>
    </source>
</evidence>
<evidence type="ECO:0000305" key="4"/>
<protein>
    <recommendedName>
        <fullName>Type IV secretion system protein virB9</fullName>
    </recommendedName>
</protein>
<feature type="signal peptide" evidence="2">
    <location>
        <begin position="1"/>
        <end position="25"/>
    </location>
</feature>
<feature type="chain" id="PRO_0000281416" description="Type IV secretion system protein virB9">
    <location>
        <begin position="26"/>
        <end position="289"/>
    </location>
</feature>
<feature type="region of interest" description="Disordered" evidence="3">
    <location>
        <begin position="267"/>
        <end position="289"/>
    </location>
</feature>
<feature type="compositionally biased region" description="Polar residues" evidence="3">
    <location>
        <begin position="269"/>
        <end position="279"/>
    </location>
</feature>
<feature type="sequence variant" description="In strain: ATCC VR-358 / Fuller / CIP 107027.">
    <original>QVREGDVSAGNDT</original>
    <variation>KFVKATFHRRY</variation>
    <location>
        <begin position="121"/>
        <end position="133"/>
    </location>
</feature>
<feature type="sequence variant" description="In strain: ATCC VR-358 /Fuller / CIP 107027.">
    <original>KFRYPEDEALRK</original>
    <variation>SFVIQKNFAQ</variation>
    <location>
        <begin position="138"/>
        <end position="149"/>
    </location>
</feature>
<comment type="function">
    <text>Component of the type IV secretion system VirB/VirD4 which could be a major virulence determinant for subversion of human endothelial cell (HEC) function.</text>
</comment>
<comment type="subunit">
    <text evidence="1">Interacts with virB8, virB10, virB11 and the 15 kDa protein that is encoded within the VirB locus.</text>
</comment>
<comment type="subcellular location">
    <subcellularLocation>
        <location evidence="4">Periplasm</location>
    </subcellularLocation>
</comment>
<comment type="similarity">
    <text evidence="4">Belongs to the TrbG/VirB9 family.</text>
</comment>
<comment type="sequence caution" evidence="4">
    <conflict type="erroneous initiation">
        <sequence resource="EMBL-CDS" id="CAF26527"/>
    </conflict>
</comment>
<sequence>MMRFSKIIFLAFLFAISCLTVPLFAETAPVSARKDNRIRFVNYDPYNVTQIIGSIRSSVQLEFADDEEVTYVGIGNSVAWQVAPAGHFVFLKPREVQPVTNLQIVTSRQDGTKRSYQFELQVREGDVSAGNDTYFLVKFRYPEDEALRKKLAKAAEAAQREENFVNDVFNIHENFGPRNWAYEAQGSSLIEPASVYDNGKTTTFTFLGNTEIPAIYLVSLDGQESLVPKSIKGNKVIVHAIAAQFTLRRGNDVLCIFNKRFVPEGINPETGTTSPSVQRRVNIGNGHEG</sequence>
<name>VIRB9_BARQU</name>
<keyword id="KW-0574">Periplasm</keyword>
<keyword id="KW-0732">Signal</keyword>
<keyword id="KW-0813">Transport</keyword>
<keyword id="KW-0843">Virulence</keyword>
<reference key="1">
    <citation type="submission" date="2002-06" db="EMBL/GenBank/DDBJ databases">
        <title>Evolution of type IV secretion systems in Bartonella: horizontal transmission and gene conversion.</title>
        <authorList>
            <person name="Alsmark U.C.M."/>
            <person name="Frank A.C."/>
            <person name="Thollesson M."/>
            <person name="Andersson S.G.E."/>
        </authorList>
    </citation>
    <scope>NUCLEOTIDE SEQUENCE [GENOMIC DNA]</scope>
    <source>
        <strain>Toulouse</strain>
    </source>
</reference>
<reference key="2">
    <citation type="submission" date="2003-01" db="EMBL/GenBank/DDBJ databases">
        <title>Genes composing the virB operon of Bartonella quintana.</title>
        <authorList>
            <person name="Kohlhorst D.E."/>
            <person name="Soni T."/>
            <person name="Baumstark B.R."/>
        </authorList>
    </citation>
    <scope>NUCLEOTIDE SEQUENCE [GENOMIC DNA]</scope>
    <source>
        <strain>ATCC VR-358 / Fuller / CIP 107027</strain>
    </source>
</reference>
<reference key="3">
    <citation type="journal article" date="2004" name="Proc. Natl. Acad. Sci. U.S.A.">
        <title>The louse-borne human pathogen Bartonella quintana is a genomic derivative of the zoonotic agent Bartonella henselae.</title>
        <authorList>
            <person name="Alsmark U.C.M."/>
            <person name="Frank A.C."/>
            <person name="Karlberg E.O."/>
            <person name="Legault B.-A."/>
            <person name="Ardell D.H."/>
            <person name="Canbaeck B."/>
            <person name="Eriksson A.-S."/>
            <person name="Naeslund A.K."/>
            <person name="Handley S.A."/>
            <person name="Huvet M."/>
            <person name="La Scola B."/>
            <person name="Holmberg M."/>
            <person name="Andersson S.G.E."/>
        </authorList>
    </citation>
    <scope>NUCLEOTIDE SEQUENCE [LARGE SCALE GENOMIC DNA]</scope>
    <scope>POSSIBLE FUNCTION</scope>
    <source>
        <strain>Toulouse</strain>
    </source>
</reference>
<dbReference type="EMBL" id="AY122055">
    <property type="protein sequence ID" value="AAM82242.1"/>
    <property type="molecule type" value="Genomic_DNA"/>
</dbReference>
<dbReference type="EMBL" id="AY216720">
    <property type="protein sequence ID" value="AAO85707.1"/>
    <property type="molecule type" value="Genomic_DNA"/>
</dbReference>
<dbReference type="EMBL" id="BX897700">
    <property type="protein sequence ID" value="CAF26527.1"/>
    <property type="status" value="ALT_INIT"/>
    <property type="molecule type" value="Genomic_DNA"/>
</dbReference>
<dbReference type="RefSeq" id="WP_034450092.1">
    <property type="nucleotide sequence ID" value="NC_005955.1"/>
</dbReference>
<dbReference type="SMR" id="Q6FYW2"/>
<dbReference type="KEGG" id="bqu:BQ10600"/>
<dbReference type="eggNOG" id="COG3504">
    <property type="taxonomic scope" value="Bacteria"/>
</dbReference>
<dbReference type="HOGENOM" id="CLU_058585_3_0_5"/>
<dbReference type="OrthoDB" id="7390264at2"/>
<dbReference type="Proteomes" id="UP000000597">
    <property type="component" value="Chromosome"/>
</dbReference>
<dbReference type="GO" id="GO:0042597">
    <property type="term" value="C:periplasmic space"/>
    <property type="evidence" value="ECO:0007669"/>
    <property type="project" value="UniProtKB-SubCell"/>
</dbReference>
<dbReference type="CDD" id="cd06911">
    <property type="entry name" value="VirB9_CagX_TrbG"/>
    <property type="match status" value="1"/>
</dbReference>
<dbReference type="Gene3D" id="2.60.40.2500">
    <property type="match status" value="1"/>
</dbReference>
<dbReference type="InterPro" id="IPR010258">
    <property type="entry name" value="Conjugal_tfr_TrbG/VirB9/CagX"/>
</dbReference>
<dbReference type="InterPro" id="IPR014148">
    <property type="entry name" value="VirB9"/>
</dbReference>
<dbReference type="InterPro" id="IPR033645">
    <property type="entry name" value="VirB9/CagX/TrbG_C"/>
</dbReference>
<dbReference type="InterPro" id="IPR038161">
    <property type="entry name" value="VirB9/CagX/TrbG_C_sf"/>
</dbReference>
<dbReference type="NCBIfam" id="TIGR02781">
    <property type="entry name" value="VirB9"/>
    <property type="match status" value="1"/>
</dbReference>
<dbReference type="Pfam" id="PF03524">
    <property type="entry name" value="CagX"/>
    <property type="match status" value="1"/>
</dbReference>
<dbReference type="PROSITE" id="PS51257">
    <property type="entry name" value="PROKAR_LIPOPROTEIN"/>
    <property type="match status" value="1"/>
</dbReference>
<proteinExistence type="inferred from homology"/>